<keyword id="KW-0007">Acetylation</keyword>
<keyword id="KW-0010">Activator</keyword>
<keyword id="KW-0025">Alternative splicing</keyword>
<keyword id="KW-0238">DNA-binding</keyword>
<keyword id="KW-1017">Isopeptide bond</keyword>
<keyword id="KW-0479">Metal-binding</keyword>
<keyword id="KW-0488">Methylation</keyword>
<keyword id="KW-0507">mRNA processing</keyword>
<keyword id="KW-0508">mRNA splicing</keyword>
<keyword id="KW-0539">Nucleus</keyword>
<keyword id="KW-0597">Phosphoprotein</keyword>
<keyword id="KW-1185">Reference proteome</keyword>
<keyword id="KW-0677">Repeat</keyword>
<keyword id="KW-0804">Transcription</keyword>
<keyword id="KW-0805">Transcription regulation</keyword>
<keyword id="KW-0832">Ubl conjugation</keyword>
<keyword id="KW-0862">Zinc</keyword>
<keyword id="KW-0863">Zinc-finger</keyword>
<comment type="function">
    <text evidence="1 5">Core component of the DBIRD complex, a multiprotein complex that acts at the interface between core mRNP particles and RNA polymerase II (RNAPII) and integrates transcript elongation with the regulation of alternative splicing: the DBIRD complex affects local transcript elongation rates and alternative splicing of a large set of exons embedded in (A + T)-rich DNA regions (By similarity). May also play a role in neuronal differentiation. Able to bind DNA and activate expression in vitro.</text>
</comment>
<comment type="subunit">
    <text evidence="1">Component of the DBIRD complex. Interacts with CCAR2; the interaction is direct (By similarity).</text>
</comment>
<comment type="subcellular location">
    <subcellularLocation>
        <location evidence="5 6">Nucleus matrix</location>
    </subcellularLocation>
</comment>
<comment type="alternative products">
    <event type="alternative splicing"/>
    <isoform>
        <id>O88291-1</id>
        <name>1</name>
        <sequence type="displayed"/>
    </isoform>
    <isoform>
        <id>O88291-2</id>
        <name>2</name>
        <sequence type="described" ref="VSP_014957"/>
    </isoform>
    <isoform>
        <id>O88291-3</id>
        <name>3</name>
        <sequence type="described" ref="VSP_014958 VSP_014959"/>
    </isoform>
</comment>
<comment type="tissue specificity">
    <text evidence="5 6">Ubiquitously expressed in adult tissues. Highly expressed in neuronal tissues such as brain and neural tube.</text>
</comment>
<comment type="developmental stage">
    <text evidence="5 6">Weakly expressed during 9.5 dpc and 10.5 dpc, expressed at highest level in 11.5 dpc and gradually decreases thereafter. During the cell cycle, it is weakly expressed in G0 and G1 phases. It increases during G1, S, G2 and M phases.</text>
</comment>
<comment type="induction">
    <text evidence="5">Upon retinoic acid treatment.</text>
</comment>
<comment type="similarity">
    <text evidence="3">Belongs to the AKAP95 family.</text>
</comment>
<comment type="sequence caution" evidence="9">
    <conflict type="miscellaneous discrepancy">
        <sequence resource="EMBL-CDS" id="AAH05567"/>
    </conflict>
    <text>Contaminating sequence. Potential poly-A sequence.</text>
</comment>
<protein>
    <recommendedName>
        <fullName>DBIRD complex subunit ZNF326</fullName>
    </recommendedName>
    <alternativeName>
        <fullName>Zinc finger protein 326</fullName>
    </alternativeName>
    <alternativeName>
        <fullName>Zinc finger protein interacting with mRNPs</fullName>
    </alternativeName>
    <alternativeName>
        <fullName>Zinc finger protein-associated with nuclear matrix of 75 kDa</fullName>
    </alternativeName>
</protein>
<evidence type="ECO:0000250" key="1"/>
<evidence type="ECO:0000250" key="2">
    <source>
        <dbReference type="UniProtKB" id="Q5BKZ1"/>
    </source>
</evidence>
<evidence type="ECO:0000255" key="3">
    <source>
        <dbReference type="PROSITE-ProRule" id="PRU01140"/>
    </source>
</evidence>
<evidence type="ECO:0000256" key="4">
    <source>
        <dbReference type="SAM" id="MobiDB-lite"/>
    </source>
</evidence>
<evidence type="ECO:0000269" key="5">
    <source>
    </source>
</evidence>
<evidence type="ECO:0000269" key="6">
    <source>
    </source>
</evidence>
<evidence type="ECO:0000303" key="7">
    <source>
    </source>
</evidence>
<evidence type="ECO:0000303" key="8">
    <source>
    </source>
</evidence>
<evidence type="ECO:0000305" key="9"/>
<evidence type="ECO:0007744" key="10">
    <source>
    </source>
</evidence>
<evidence type="ECO:0007744" key="11">
    <source>
    </source>
</evidence>
<organism>
    <name type="scientific">Mus musculus</name>
    <name type="common">Mouse</name>
    <dbReference type="NCBI Taxonomy" id="10090"/>
    <lineage>
        <taxon>Eukaryota</taxon>
        <taxon>Metazoa</taxon>
        <taxon>Chordata</taxon>
        <taxon>Craniata</taxon>
        <taxon>Vertebrata</taxon>
        <taxon>Euteleostomi</taxon>
        <taxon>Mammalia</taxon>
        <taxon>Eutheria</taxon>
        <taxon>Euarchontoglires</taxon>
        <taxon>Glires</taxon>
        <taxon>Rodentia</taxon>
        <taxon>Myomorpha</taxon>
        <taxon>Muroidea</taxon>
        <taxon>Muridae</taxon>
        <taxon>Murinae</taxon>
        <taxon>Mus</taxon>
        <taxon>Mus</taxon>
    </lineage>
</organism>
<name>ZN326_MOUSE</name>
<dbReference type="EMBL" id="AB012725">
    <property type="protein sequence ID" value="BAA31522.1"/>
    <property type="molecule type" value="mRNA"/>
</dbReference>
<dbReference type="EMBL" id="AK017693">
    <property type="protein sequence ID" value="BAB30878.1"/>
    <property type="molecule type" value="mRNA"/>
</dbReference>
<dbReference type="EMBL" id="AK032801">
    <property type="protein sequence ID" value="BAC28029.1"/>
    <property type="molecule type" value="mRNA"/>
</dbReference>
<dbReference type="EMBL" id="AK146438">
    <property type="protein sequence ID" value="BAE27172.1"/>
    <property type="molecule type" value="mRNA"/>
</dbReference>
<dbReference type="EMBL" id="AK162729">
    <property type="protein sequence ID" value="BAE37040.1"/>
    <property type="molecule type" value="mRNA"/>
</dbReference>
<dbReference type="EMBL" id="BC037055">
    <property type="protein sequence ID" value="AAH37055.1"/>
    <property type="molecule type" value="mRNA"/>
</dbReference>
<dbReference type="EMBL" id="BC005567">
    <property type="protein sequence ID" value="AAH05567.1"/>
    <property type="status" value="ALT_SEQ"/>
    <property type="molecule type" value="mRNA"/>
</dbReference>
<dbReference type="CCDS" id="CCDS19496.1">
    <molecule id="O88291-1"/>
</dbReference>
<dbReference type="RefSeq" id="NP_061229.2">
    <property type="nucleotide sequence ID" value="NM_018759.2"/>
</dbReference>
<dbReference type="SMR" id="O88291"/>
<dbReference type="BioGRID" id="207624">
    <property type="interactions" value="12"/>
</dbReference>
<dbReference type="DIP" id="DIP-58947N"/>
<dbReference type="FunCoup" id="O88291">
    <property type="interactions" value="2614"/>
</dbReference>
<dbReference type="IntAct" id="O88291">
    <property type="interactions" value="3"/>
</dbReference>
<dbReference type="MINT" id="O88291"/>
<dbReference type="STRING" id="10090.ENSMUSP00000031227"/>
<dbReference type="GlyGen" id="O88291">
    <property type="glycosylation" value="2 sites, 1 N-linked glycan (1 site), 1 O-linked glycan (1 site)"/>
</dbReference>
<dbReference type="iPTMnet" id="O88291"/>
<dbReference type="PhosphoSitePlus" id="O88291"/>
<dbReference type="jPOST" id="O88291"/>
<dbReference type="PaxDb" id="10090-ENSMUSP00000031227"/>
<dbReference type="PeptideAtlas" id="O88291"/>
<dbReference type="ProteomicsDB" id="275072">
    <molecule id="O88291-1"/>
</dbReference>
<dbReference type="ProteomicsDB" id="275073">
    <molecule id="O88291-2"/>
</dbReference>
<dbReference type="ProteomicsDB" id="275074">
    <molecule id="O88291-3"/>
</dbReference>
<dbReference type="Pumba" id="O88291"/>
<dbReference type="DNASU" id="54367"/>
<dbReference type="GeneID" id="54367"/>
<dbReference type="KEGG" id="mmu:54367"/>
<dbReference type="UCSC" id="uc008ylj.3">
    <molecule id="O88291-1"/>
    <property type="organism name" value="mouse"/>
</dbReference>
<dbReference type="AGR" id="MGI:1927246"/>
<dbReference type="CTD" id="54367"/>
<dbReference type="MGI" id="MGI:1927246">
    <property type="gene designation" value="Zfp326"/>
</dbReference>
<dbReference type="eggNOG" id="ENOG502QUAZ">
    <property type="taxonomic scope" value="Eukaryota"/>
</dbReference>
<dbReference type="InParanoid" id="O88291"/>
<dbReference type="OrthoDB" id="9904304at2759"/>
<dbReference type="PhylomeDB" id="O88291"/>
<dbReference type="TreeFam" id="TF105407"/>
<dbReference type="BioGRID-ORCS" id="54367">
    <property type="hits" value="0 hits in 79 CRISPR screens"/>
</dbReference>
<dbReference type="ChiTaRS" id="Zfp326">
    <property type="organism name" value="mouse"/>
</dbReference>
<dbReference type="PRO" id="PR:O88291"/>
<dbReference type="Proteomes" id="UP000000589">
    <property type="component" value="Unplaced"/>
</dbReference>
<dbReference type="RNAct" id="O88291">
    <property type="molecule type" value="protein"/>
</dbReference>
<dbReference type="GO" id="GO:0044609">
    <property type="term" value="C:DBIRD complex"/>
    <property type="evidence" value="ECO:0000250"/>
    <property type="project" value="UniProtKB"/>
</dbReference>
<dbReference type="GO" id="GO:0016363">
    <property type="term" value="C:nuclear matrix"/>
    <property type="evidence" value="ECO:0000314"/>
    <property type="project" value="MGI"/>
</dbReference>
<dbReference type="GO" id="GO:0005634">
    <property type="term" value="C:nucleus"/>
    <property type="evidence" value="ECO:0000314"/>
    <property type="project" value="MGI"/>
</dbReference>
<dbReference type="GO" id="GO:0003677">
    <property type="term" value="F:DNA binding"/>
    <property type="evidence" value="ECO:0000314"/>
    <property type="project" value="MGI"/>
</dbReference>
<dbReference type="GO" id="GO:0000993">
    <property type="term" value="F:RNA polymerase II complex binding"/>
    <property type="evidence" value="ECO:0000250"/>
    <property type="project" value="UniProtKB"/>
</dbReference>
<dbReference type="GO" id="GO:0008270">
    <property type="term" value="F:zinc ion binding"/>
    <property type="evidence" value="ECO:0000314"/>
    <property type="project" value="MGI"/>
</dbReference>
<dbReference type="GO" id="GO:0006397">
    <property type="term" value="P:mRNA processing"/>
    <property type="evidence" value="ECO:0007669"/>
    <property type="project" value="UniProtKB-KW"/>
</dbReference>
<dbReference type="GO" id="GO:0045893">
    <property type="term" value="P:positive regulation of DNA-templated transcription"/>
    <property type="evidence" value="ECO:0000314"/>
    <property type="project" value="MGI"/>
</dbReference>
<dbReference type="GO" id="GO:0032784">
    <property type="term" value="P:regulation of DNA-templated transcription elongation"/>
    <property type="evidence" value="ECO:0000250"/>
    <property type="project" value="UniProtKB"/>
</dbReference>
<dbReference type="GO" id="GO:0043484">
    <property type="term" value="P:regulation of RNA splicing"/>
    <property type="evidence" value="ECO:0000250"/>
    <property type="project" value="UniProtKB"/>
</dbReference>
<dbReference type="GO" id="GO:0008380">
    <property type="term" value="P:RNA splicing"/>
    <property type="evidence" value="ECO:0007669"/>
    <property type="project" value="UniProtKB-KW"/>
</dbReference>
<dbReference type="InterPro" id="IPR007071">
    <property type="entry name" value="AKAP95"/>
</dbReference>
<dbReference type="InterPro" id="IPR034736">
    <property type="entry name" value="ZF_C2H2_AKAP95"/>
</dbReference>
<dbReference type="PANTHER" id="PTHR12190">
    <property type="entry name" value="A-KINASE ANCHOR PROTEIN AKAP 8"/>
    <property type="match status" value="1"/>
</dbReference>
<dbReference type="PANTHER" id="PTHR12190:SF1">
    <property type="entry name" value="DBIRD COMPLEX SUBUNIT ZNF326"/>
    <property type="match status" value="1"/>
</dbReference>
<dbReference type="Pfam" id="PF04988">
    <property type="entry name" value="AKAP95"/>
    <property type="match status" value="1"/>
</dbReference>
<dbReference type="PROSITE" id="PS51799">
    <property type="entry name" value="ZF_C2H2_AKAP95"/>
    <property type="match status" value="2"/>
</dbReference>
<sequence length="580" mass="65225">MDFEDDYVHSTCRGAYQDFNGMDRDYGPGSYGGLDRDYGHGSYGGQRSMDSYLNQSYGMDNHSGGGGGSRFGPYESYDSRSSLGGRDLYRSGYGFNEPEQTRFGGSYGGRFESSYRNSLDSFGGRNQGGSSWEAPYSRSKLRPGFMEDRGRENYSSYSSFSSPHMKPAPVGSRGRGTPAYPESTFGSRSYDAFGGPSTGRGRGRGHMGDFGSFHRPGIIVDYQNKPANVTIATARGIKRKMMQIFIKPGGAFIKKPKLAKPMDKMNLSKSPTKTDPKNEEEEKRRIEARREKQRRRREKNSEKYGDGYRMAFTCSFCKFRTFEEKDIELHLESSSHQETLDHIQKQTKFDKVVMEFLHECMVNKFKKASIRKQQTLNHPEAYKIIEKDIMEGVTADDHMMKVETVHCSACSVYIPALHSSVQLHLKSPDHSKGKQAYKEQIKRESVLTATSILNNPIVKARYERFVKGENPFEIQDHPQDQQIEGDEEDEEKIDEPIEEEEEEEEEEEEEGEEAGSVEEEGDVEGEEGTAEAAAAGEADAVGEAEGAGEAEEAEEEEEEEGTQEFAAQACATEQCEHRQM</sequence>
<proteinExistence type="evidence at protein level"/>
<feature type="chain" id="PRO_0000075387" description="DBIRD complex subunit ZNF326">
    <location>
        <begin position="1"/>
        <end position="580"/>
    </location>
</feature>
<feature type="zinc finger region" description="C2H2 AKAP95-type 1" evidence="3">
    <location>
        <begin position="314"/>
        <end position="336"/>
    </location>
</feature>
<feature type="zinc finger region" description="C2H2 AKAP95-type 2" evidence="3">
    <location>
        <begin position="407"/>
        <end position="430"/>
    </location>
</feature>
<feature type="region of interest" description="Mediates transcriptional activation">
    <location>
        <begin position="1"/>
        <end position="124"/>
    </location>
</feature>
<feature type="region of interest" description="Disordered" evidence="4">
    <location>
        <begin position="156"/>
        <end position="196"/>
    </location>
</feature>
<feature type="region of interest" description="Disordered" evidence="4">
    <location>
        <begin position="256"/>
        <end position="302"/>
    </location>
</feature>
<feature type="region of interest" description="Disordered" evidence="4">
    <location>
        <begin position="470"/>
        <end position="580"/>
    </location>
</feature>
<feature type="short sequence motif" description="Bipartite nuclear localization signal">
    <location>
        <begin position="238"/>
        <end position="260"/>
    </location>
</feature>
<feature type="compositionally biased region" description="Basic and acidic residues" evidence="4">
    <location>
        <begin position="272"/>
        <end position="290"/>
    </location>
</feature>
<feature type="compositionally biased region" description="Acidic residues" evidence="4">
    <location>
        <begin position="483"/>
        <end position="529"/>
    </location>
</feature>
<feature type="compositionally biased region" description="Low complexity" evidence="4">
    <location>
        <begin position="530"/>
        <end position="539"/>
    </location>
</feature>
<feature type="compositionally biased region" description="Acidic residues" evidence="4">
    <location>
        <begin position="540"/>
        <end position="562"/>
    </location>
</feature>
<feature type="modified residue" description="Phosphoserine" evidence="10">
    <location>
        <position position="48"/>
    </location>
</feature>
<feature type="modified residue" description="Phosphoserine" evidence="2">
    <location>
        <position position="56"/>
    </location>
</feature>
<feature type="modified residue" description="Phosphoserine" evidence="2">
    <location>
        <position position="63"/>
    </location>
</feature>
<feature type="modified residue" description="Phosphoserine" evidence="2">
    <location>
        <position position="69"/>
    </location>
</feature>
<feature type="modified residue" description="Phosphoserine" evidence="2">
    <location>
        <position position="81"/>
    </location>
</feature>
<feature type="modified residue" description="Phosphoserine" evidence="2">
    <location>
        <position position="82"/>
    </location>
</feature>
<feature type="modified residue" description="Phosphoserine" evidence="2">
    <location>
        <position position="91"/>
    </location>
</feature>
<feature type="modified residue" description="Phosphoserine" evidence="2">
    <location>
        <position position="106"/>
    </location>
</feature>
<feature type="modified residue" description="Phosphoserine" evidence="2">
    <location>
        <position position="114"/>
    </location>
</feature>
<feature type="modified residue" description="Phosphoserine" evidence="2">
    <location>
        <position position="118"/>
    </location>
</feature>
<feature type="modified residue" description="Phosphoserine" evidence="2">
    <location>
        <position position="121"/>
    </location>
</feature>
<feature type="modified residue" description="Phosphoserine" evidence="2">
    <location>
        <position position="137"/>
    </location>
</feature>
<feature type="modified residue" description="Omega-N-methylarginine" evidence="2">
    <location>
        <position position="173"/>
    </location>
</feature>
<feature type="modified residue" description="Phosphoserine" evidence="2">
    <location>
        <position position="212"/>
    </location>
</feature>
<feature type="modified residue" description="Omega-N-methylarginine" evidence="11">
    <location>
        <position position="235"/>
    </location>
</feature>
<feature type="modified residue" description="N6-acetyllysine; alternate" evidence="2">
    <location>
        <position position="247"/>
    </location>
</feature>
<feature type="modified residue" description="Phosphoserine" evidence="10">
    <location>
        <position position="270"/>
    </location>
</feature>
<feature type="cross-link" description="Glycyl lysine isopeptide (Lys-Gly) (interchain with G-Cter in SUMO2)" evidence="2">
    <location>
        <position position="140"/>
    </location>
</feature>
<feature type="cross-link" description="Glycyl lysine isopeptide (Lys-Gly) (interchain with G-Cter in SUMO2)" evidence="2">
    <location>
        <position position="240"/>
    </location>
</feature>
<feature type="cross-link" description="Glycyl lysine isopeptide (Lys-Gly) (interchain with G-Cter in SUMO2); alternate" evidence="2">
    <location>
        <position position="247"/>
    </location>
</feature>
<feature type="cross-link" description="Glycyl lysine isopeptide (Lys-Gly) (interchain with G-Cter in SUMO2)" evidence="2">
    <location>
        <position position="254"/>
    </location>
</feature>
<feature type="cross-link" description="Glycyl lysine isopeptide (Lys-Gly) (interchain with G-Cter in SUMO2)" evidence="2">
    <location>
        <position position="264"/>
    </location>
</feature>
<feature type="cross-link" description="Glycyl lysine isopeptide (Lys-Gly) (interchain with G-Cter in SUMO2)" evidence="2">
    <location>
        <position position="401"/>
    </location>
</feature>
<feature type="cross-link" description="Glycyl lysine isopeptide (Lys-Gly) (interchain with G-Cter in SUMO2)" evidence="2">
    <location>
        <position position="459"/>
    </location>
</feature>
<feature type="cross-link" description="Glycyl lysine isopeptide (Lys-Gly) (interchain with G-Cter in SUMO2)" evidence="2">
    <location>
        <position position="467"/>
    </location>
</feature>
<feature type="splice variant" id="VSP_014957" description="In isoform 2." evidence="7">
    <location>
        <begin position="1"/>
        <end position="206"/>
    </location>
</feature>
<feature type="splice variant" id="VSP_014958" description="In isoform 3." evidence="8">
    <original>DRDYGHGSYGGQRSMDSYLNQSYGMDNHSGGGG</original>
    <variation>AFKDIYLKILLLSASKGEQHLIFFFLNSYRAGS</variation>
    <location>
        <begin position="35"/>
        <end position="67"/>
    </location>
</feature>
<feature type="splice variant" id="VSP_014959" description="In isoform 3." evidence="8">
    <location>
        <begin position="68"/>
        <end position="580"/>
    </location>
</feature>
<feature type="sequence conflict" description="In Ref. 2; BAE27172." evidence="9" ref="2">
    <original>Q</original>
    <variation>R</variation>
    <location>
        <position position="55"/>
    </location>
</feature>
<feature type="sequence conflict" description="In Ref. 2; BAB30878/BAE37040." evidence="9" ref="2">
    <original>D</original>
    <variation>G</variation>
    <location>
        <position position="494"/>
    </location>
</feature>
<reference key="1">
    <citation type="journal article" date="1998" name="DNA Cell Biol.">
        <title>Cloning and characterization of a novel zinc finger protein that associates with nuclear matrix.</title>
        <authorList>
            <person name="Lee J.-Y."/>
            <person name="Kambe M."/>
            <person name="Hayashi M."/>
            <person name="Takenaga K."/>
        </authorList>
    </citation>
    <scope>NUCLEOTIDE SEQUENCE [MRNA] (ISOFORM 1)</scope>
    <scope>SUBCELLULAR LOCATION</scope>
    <scope>TISSUE SPECIFICITY</scope>
    <scope>DEVELOPMENTAL STAGE</scope>
</reference>
<reference key="2">
    <citation type="journal article" date="2005" name="Science">
        <title>The transcriptional landscape of the mammalian genome.</title>
        <authorList>
            <person name="Carninci P."/>
            <person name="Kasukawa T."/>
            <person name="Katayama S."/>
            <person name="Gough J."/>
            <person name="Frith M.C."/>
            <person name="Maeda N."/>
            <person name="Oyama R."/>
            <person name="Ravasi T."/>
            <person name="Lenhard B."/>
            <person name="Wells C."/>
            <person name="Kodzius R."/>
            <person name="Shimokawa K."/>
            <person name="Bajic V.B."/>
            <person name="Brenner S.E."/>
            <person name="Batalov S."/>
            <person name="Forrest A.R."/>
            <person name="Zavolan M."/>
            <person name="Davis M.J."/>
            <person name="Wilming L.G."/>
            <person name="Aidinis V."/>
            <person name="Allen J.E."/>
            <person name="Ambesi-Impiombato A."/>
            <person name="Apweiler R."/>
            <person name="Aturaliya R.N."/>
            <person name="Bailey T.L."/>
            <person name="Bansal M."/>
            <person name="Baxter L."/>
            <person name="Beisel K.W."/>
            <person name="Bersano T."/>
            <person name="Bono H."/>
            <person name="Chalk A.M."/>
            <person name="Chiu K.P."/>
            <person name="Choudhary V."/>
            <person name="Christoffels A."/>
            <person name="Clutterbuck D.R."/>
            <person name="Crowe M.L."/>
            <person name="Dalla E."/>
            <person name="Dalrymple B.P."/>
            <person name="de Bono B."/>
            <person name="Della Gatta G."/>
            <person name="di Bernardo D."/>
            <person name="Down T."/>
            <person name="Engstrom P."/>
            <person name="Fagiolini M."/>
            <person name="Faulkner G."/>
            <person name="Fletcher C.F."/>
            <person name="Fukushima T."/>
            <person name="Furuno M."/>
            <person name="Futaki S."/>
            <person name="Gariboldi M."/>
            <person name="Georgii-Hemming P."/>
            <person name="Gingeras T.R."/>
            <person name="Gojobori T."/>
            <person name="Green R.E."/>
            <person name="Gustincich S."/>
            <person name="Harbers M."/>
            <person name="Hayashi Y."/>
            <person name="Hensch T.K."/>
            <person name="Hirokawa N."/>
            <person name="Hill D."/>
            <person name="Huminiecki L."/>
            <person name="Iacono M."/>
            <person name="Ikeo K."/>
            <person name="Iwama A."/>
            <person name="Ishikawa T."/>
            <person name="Jakt M."/>
            <person name="Kanapin A."/>
            <person name="Katoh M."/>
            <person name="Kawasawa Y."/>
            <person name="Kelso J."/>
            <person name="Kitamura H."/>
            <person name="Kitano H."/>
            <person name="Kollias G."/>
            <person name="Krishnan S.P."/>
            <person name="Kruger A."/>
            <person name="Kummerfeld S.K."/>
            <person name="Kurochkin I.V."/>
            <person name="Lareau L.F."/>
            <person name="Lazarevic D."/>
            <person name="Lipovich L."/>
            <person name="Liu J."/>
            <person name="Liuni S."/>
            <person name="McWilliam S."/>
            <person name="Madan Babu M."/>
            <person name="Madera M."/>
            <person name="Marchionni L."/>
            <person name="Matsuda H."/>
            <person name="Matsuzawa S."/>
            <person name="Miki H."/>
            <person name="Mignone F."/>
            <person name="Miyake S."/>
            <person name="Morris K."/>
            <person name="Mottagui-Tabar S."/>
            <person name="Mulder N."/>
            <person name="Nakano N."/>
            <person name="Nakauchi H."/>
            <person name="Ng P."/>
            <person name="Nilsson R."/>
            <person name="Nishiguchi S."/>
            <person name="Nishikawa S."/>
            <person name="Nori F."/>
            <person name="Ohara O."/>
            <person name="Okazaki Y."/>
            <person name="Orlando V."/>
            <person name="Pang K.C."/>
            <person name="Pavan W.J."/>
            <person name="Pavesi G."/>
            <person name="Pesole G."/>
            <person name="Petrovsky N."/>
            <person name="Piazza S."/>
            <person name="Reed J."/>
            <person name="Reid J.F."/>
            <person name="Ring B.Z."/>
            <person name="Ringwald M."/>
            <person name="Rost B."/>
            <person name="Ruan Y."/>
            <person name="Salzberg S.L."/>
            <person name="Sandelin A."/>
            <person name="Schneider C."/>
            <person name="Schoenbach C."/>
            <person name="Sekiguchi K."/>
            <person name="Semple C.A."/>
            <person name="Seno S."/>
            <person name="Sessa L."/>
            <person name="Sheng Y."/>
            <person name="Shibata Y."/>
            <person name="Shimada H."/>
            <person name="Shimada K."/>
            <person name="Silva D."/>
            <person name="Sinclair B."/>
            <person name="Sperling S."/>
            <person name="Stupka E."/>
            <person name="Sugiura K."/>
            <person name="Sultana R."/>
            <person name="Takenaka Y."/>
            <person name="Taki K."/>
            <person name="Tammoja K."/>
            <person name="Tan S.L."/>
            <person name="Tang S."/>
            <person name="Taylor M.S."/>
            <person name="Tegner J."/>
            <person name="Teichmann S.A."/>
            <person name="Ueda H.R."/>
            <person name="van Nimwegen E."/>
            <person name="Verardo R."/>
            <person name="Wei C.L."/>
            <person name="Yagi K."/>
            <person name="Yamanishi H."/>
            <person name="Zabarovsky E."/>
            <person name="Zhu S."/>
            <person name="Zimmer A."/>
            <person name="Hide W."/>
            <person name="Bult C."/>
            <person name="Grimmond S.M."/>
            <person name="Teasdale R.D."/>
            <person name="Liu E.T."/>
            <person name="Brusic V."/>
            <person name="Quackenbush J."/>
            <person name="Wahlestedt C."/>
            <person name="Mattick J.S."/>
            <person name="Hume D.A."/>
            <person name="Kai C."/>
            <person name="Sasaki D."/>
            <person name="Tomaru Y."/>
            <person name="Fukuda S."/>
            <person name="Kanamori-Katayama M."/>
            <person name="Suzuki M."/>
            <person name="Aoki J."/>
            <person name="Arakawa T."/>
            <person name="Iida J."/>
            <person name="Imamura K."/>
            <person name="Itoh M."/>
            <person name="Kato T."/>
            <person name="Kawaji H."/>
            <person name="Kawagashira N."/>
            <person name="Kawashima T."/>
            <person name="Kojima M."/>
            <person name="Kondo S."/>
            <person name="Konno H."/>
            <person name="Nakano K."/>
            <person name="Ninomiya N."/>
            <person name="Nishio T."/>
            <person name="Okada M."/>
            <person name="Plessy C."/>
            <person name="Shibata K."/>
            <person name="Shiraki T."/>
            <person name="Suzuki S."/>
            <person name="Tagami M."/>
            <person name="Waki K."/>
            <person name="Watahiki A."/>
            <person name="Okamura-Oho Y."/>
            <person name="Suzuki H."/>
            <person name="Kawai J."/>
            <person name="Hayashizaki Y."/>
        </authorList>
    </citation>
    <scope>NUCLEOTIDE SEQUENCE [LARGE SCALE MRNA] (ISOFORMS 1 AND 3)</scope>
    <source>
        <strain>BALB/cJ</strain>
        <strain>C57BL/6J</strain>
        <tissue>Thymus</tissue>
        <tissue>Wolffian duct</tissue>
    </source>
</reference>
<reference key="3">
    <citation type="journal article" date="2004" name="Genome Res.">
        <title>The status, quality, and expansion of the NIH full-length cDNA project: the Mammalian Gene Collection (MGC).</title>
        <authorList>
            <consortium name="The MGC Project Team"/>
        </authorList>
    </citation>
    <scope>NUCLEOTIDE SEQUENCE [LARGE SCALE MRNA] (ISOFORM 2)</scope>
    <scope>NUCLEOTIDE SEQUENCE [LARGE SCALE MRNA] OF 1-277 (ISOFORM 1)</scope>
    <source>
        <strain>FVB/N</strain>
        <tissue>Mammary tumor</tissue>
    </source>
</reference>
<reference key="4">
    <citation type="journal article" date="2000" name="DNA Cell Biol.">
        <title>Characterization of a zinc finger protein ZAN75: nuclear localization signal, transcriptional activator activity, and expression during neuronal differentiation of P19 cells.</title>
        <authorList>
            <person name="Lee J.-Y."/>
            <person name="Nakane Y."/>
            <person name="Koshikawa N."/>
            <person name="Nakayama K."/>
            <person name="Hayashi M."/>
            <person name="Takenaga K."/>
        </authorList>
    </citation>
    <scope>FUNCTION</scope>
    <scope>BIPARTITE NUCLEAR LOCALIZATION SIGNAL</scope>
    <scope>SUBCELLULAR LOCATION</scope>
    <scope>TISSUE SPECIFICITY</scope>
    <scope>DEVELOPMENTAL STAGE</scope>
    <scope>INDUCTION</scope>
</reference>
<reference key="5">
    <citation type="journal article" date="2010" name="Cell">
        <title>A tissue-specific atlas of mouse protein phosphorylation and expression.</title>
        <authorList>
            <person name="Huttlin E.L."/>
            <person name="Jedrychowski M.P."/>
            <person name="Elias J.E."/>
            <person name="Goswami T."/>
            <person name="Rad R."/>
            <person name="Beausoleil S.A."/>
            <person name="Villen J."/>
            <person name="Haas W."/>
            <person name="Sowa M.E."/>
            <person name="Gygi S.P."/>
        </authorList>
    </citation>
    <scope>PHOSPHORYLATION [LARGE SCALE ANALYSIS] AT SER-48 AND SER-270</scope>
    <scope>IDENTIFICATION BY MASS SPECTROMETRY [LARGE SCALE ANALYSIS]</scope>
    <source>
        <tissue>Brain</tissue>
        <tissue>Kidney</tissue>
    </source>
</reference>
<reference key="6">
    <citation type="journal article" date="2014" name="Mol. Cell. Proteomics">
        <title>Immunoaffinity enrichment and mass spectrometry analysis of protein methylation.</title>
        <authorList>
            <person name="Guo A."/>
            <person name="Gu H."/>
            <person name="Zhou J."/>
            <person name="Mulhern D."/>
            <person name="Wang Y."/>
            <person name="Lee K.A."/>
            <person name="Yang V."/>
            <person name="Aguiar M."/>
            <person name="Kornhauser J."/>
            <person name="Jia X."/>
            <person name="Ren J."/>
            <person name="Beausoleil S.A."/>
            <person name="Silva J.C."/>
            <person name="Vemulapalli V."/>
            <person name="Bedford M.T."/>
            <person name="Comb M.J."/>
        </authorList>
    </citation>
    <scope>METHYLATION [LARGE SCALE ANALYSIS] AT ARG-235</scope>
    <scope>IDENTIFICATION BY MASS SPECTROMETRY [LARGE SCALE ANALYSIS]</scope>
    <source>
        <tissue>Embryo</tissue>
    </source>
</reference>
<gene>
    <name type="primary">Znf326</name>
    <name type="synonym">Zan75</name>
    <name type="synonym">Zfp326</name>
    <name type="synonym">Zird</name>
</gene>
<accession>O88291</accession>
<accession>Q05DP5</accession>
<accession>Q3TRI9</accession>
<accession>Q3UJI3</accession>
<accession>Q8BSJ5</accession>
<accession>Q8K1X9</accession>
<accession>Q9CYG9</accession>